<feature type="chain" id="PRO_1000140713" description="Small ribosomal subunit protein uS4">
    <location>
        <begin position="1"/>
        <end position="206"/>
    </location>
</feature>
<feature type="domain" description="S4 RNA-binding" evidence="1">
    <location>
        <begin position="96"/>
        <end position="158"/>
    </location>
</feature>
<reference key="1">
    <citation type="journal article" date="2009" name="Infect. Immun.">
        <title>Comparative genomics reveal extensive transposon-mediated genomic plasticity and diversity among potential effector proteins within the genus Coxiella.</title>
        <authorList>
            <person name="Beare P.A."/>
            <person name="Unsworth N."/>
            <person name="Andoh M."/>
            <person name="Voth D.E."/>
            <person name="Omsland A."/>
            <person name="Gilk S.D."/>
            <person name="Williams K.P."/>
            <person name="Sobral B.W."/>
            <person name="Kupko J.J. III"/>
            <person name="Porcella S.F."/>
            <person name="Samuel J.E."/>
            <person name="Heinzen R.A."/>
        </authorList>
    </citation>
    <scope>NUCLEOTIDE SEQUENCE [LARGE SCALE GENOMIC DNA]</scope>
    <source>
        <strain>CbuG_Q212</strain>
    </source>
</reference>
<accession>B6J239</accession>
<comment type="function">
    <text evidence="1">One of the primary rRNA binding proteins, it binds directly to 16S rRNA where it nucleates assembly of the body of the 30S subunit.</text>
</comment>
<comment type="function">
    <text evidence="1">With S5 and S12 plays an important role in translational accuracy.</text>
</comment>
<comment type="subunit">
    <text evidence="1">Part of the 30S ribosomal subunit. Contacts protein S5. The interaction surface between S4 and S5 is involved in control of translational fidelity.</text>
</comment>
<comment type="similarity">
    <text evidence="1">Belongs to the universal ribosomal protein uS4 family.</text>
</comment>
<dbReference type="EMBL" id="CP001019">
    <property type="protein sequence ID" value="ACJ19017.1"/>
    <property type="molecule type" value="Genomic_DNA"/>
</dbReference>
<dbReference type="RefSeq" id="WP_010957468.1">
    <property type="nucleotide sequence ID" value="NC_011527.1"/>
</dbReference>
<dbReference type="SMR" id="B6J239"/>
<dbReference type="KEGG" id="cbg:CbuG_1743"/>
<dbReference type="HOGENOM" id="CLU_092403_0_2_6"/>
<dbReference type="GO" id="GO:0015935">
    <property type="term" value="C:small ribosomal subunit"/>
    <property type="evidence" value="ECO:0007669"/>
    <property type="project" value="InterPro"/>
</dbReference>
<dbReference type="GO" id="GO:0019843">
    <property type="term" value="F:rRNA binding"/>
    <property type="evidence" value="ECO:0007669"/>
    <property type="project" value="UniProtKB-UniRule"/>
</dbReference>
<dbReference type="GO" id="GO:0003735">
    <property type="term" value="F:structural constituent of ribosome"/>
    <property type="evidence" value="ECO:0007669"/>
    <property type="project" value="InterPro"/>
</dbReference>
<dbReference type="GO" id="GO:0042274">
    <property type="term" value="P:ribosomal small subunit biogenesis"/>
    <property type="evidence" value="ECO:0007669"/>
    <property type="project" value="TreeGrafter"/>
</dbReference>
<dbReference type="GO" id="GO:0006412">
    <property type="term" value="P:translation"/>
    <property type="evidence" value="ECO:0007669"/>
    <property type="project" value="UniProtKB-UniRule"/>
</dbReference>
<dbReference type="CDD" id="cd00165">
    <property type="entry name" value="S4"/>
    <property type="match status" value="1"/>
</dbReference>
<dbReference type="FunFam" id="1.10.1050.10:FF:000001">
    <property type="entry name" value="30S ribosomal protein S4"/>
    <property type="match status" value="1"/>
</dbReference>
<dbReference type="FunFam" id="3.10.290.10:FF:000001">
    <property type="entry name" value="30S ribosomal protein S4"/>
    <property type="match status" value="1"/>
</dbReference>
<dbReference type="Gene3D" id="1.10.1050.10">
    <property type="entry name" value="Ribosomal Protein S4 Delta 41, Chain A, domain 1"/>
    <property type="match status" value="1"/>
</dbReference>
<dbReference type="Gene3D" id="3.10.290.10">
    <property type="entry name" value="RNA-binding S4 domain"/>
    <property type="match status" value="1"/>
</dbReference>
<dbReference type="HAMAP" id="MF_01306_B">
    <property type="entry name" value="Ribosomal_uS4_B"/>
    <property type="match status" value="1"/>
</dbReference>
<dbReference type="InterPro" id="IPR022801">
    <property type="entry name" value="Ribosomal_uS4"/>
</dbReference>
<dbReference type="InterPro" id="IPR005709">
    <property type="entry name" value="Ribosomal_uS4_bac-type"/>
</dbReference>
<dbReference type="InterPro" id="IPR018079">
    <property type="entry name" value="Ribosomal_uS4_CS"/>
</dbReference>
<dbReference type="InterPro" id="IPR001912">
    <property type="entry name" value="Ribosomal_uS4_N"/>
</dbReference>
<dbReference type="InterPro" id="IPR002942">
    <property type="entry name" value="S4_RNA-bd"/>
</dbReference>
<dbReference type="InterPro" id="IPR036986">
    <property type="entry name" value="S4_RNA-bd_sf"/>
</dbReference>
<dbReference type="NCBIfam" id="NF003717">
    <property type="entry name" value="PRK05327.1"/>
    <property type="match status" value="1"/>
</dbReference>
<dbReference type="NCBIfam" id="TIGR01017">
    <property type="entry name" value="rpsD_bact"/>
    <property type="match status" value="1"/>
</dbReference>
<dbReference type="PANTHER" id="PTHR11831">
    <property type="entry name" value="30S 40S RIBOSOMAL PROTEIN"/>
    <property type="match status" value="1"/>
</dbReference>
<dbReference type="PANTHER" id="PTHR11831:SF4">
    <property type="entry name" value="SMALL RIBOSOMAL SUBUNIT PROTEIN US4M"/>
    <property type="match status" value="1"/>
</dbReference>
<dbReference type="Pfam" id="PF00163">
    <property type="entry name" value="Ribosomal_S4"/>
    <property type="match status" value="1"/>
</dbReference>
<dbReference type="Pfam" id="PF01479">
    <property type="entry name" value="S4"/>
    <property type="match status" value="1"/>
</dbReference>
<dbReference type="SMART" id="SM01390">
    <property type="entry name" value="Ribosomal_S4"/>
    <property type="match status" value="1"/>
</dbReference>
<dbReference type="SMART" id="SM00363">
    <property type="entry name" value="S4"/>
    <property type="match status" value="1"/>
</dbReference>
<dbReference type="SUPFAM" id="SSF55174">
    <property type="entry name" value="Alpha-L RNA-binding motif"/>
    <property type="match status" value="1"/>
</dbReference>
<dbReference type="PROSITE" id="PS00632">
    <property type="entry name" value="RIBOSOMAL_S4"/>
    <property type="match status" value="1"/>
</dbReference>
<dbReference type="PROSITE" id="PS50889">
    <property type="entry name" value="S4"/>
    <property type="match status" value="1"/>
</dbReference>
<proteinExistence type="inferred from homology"/>
<keyword id="KW-0687">Ribonucleoprotein</keyword>
<keyword id="KW-0689">Ribosomal protein</keyword>
<keyword id="KW-0694">RNA-binding</keyword>
<keyword id="KW-0699">rRNA-binding</keyword>
<gene>
    <name evidence="1" type="primary">rpsD</name>
    <name type="ordered locus">CbuG_1743</name>
</gene>
<organism>
    <name type="scientific">Coxiella burnetii (strain CbuG_Q212)</name>
    <name type="common">Coxiella burnetii (strain Q212)</name>
    <dbReference type="NCBI Taxonomy" id="434923"/>
    <lineage>
        <taxon>Bacteria</taxon>
        <taxon>Pseudomonadati</taxon>
        <taxon>Pseudomonadota</taxon>
        <taxon>Gammaproteobacteria</taxon>
        <taxon>Legionellales</taxon>
        <taxon>Coxiellaceae</taxon>
        <taxon>Coxiella</taxon>
    </lineage>
</organism>
<protein>
    <recommendedName>
        <fullName evidence="1">Small ribosomal subunit protein uS4</fullName>
    </recommendedName>
    <alternativeName>
        <fullName evidence="2">30S ribosomal protein S4</fullName>
    </alternativeName>
</protein>
<evidence type="ECO:0000255" key="1">
    <source>
        <dbReference type="HAMAP-Rule" id="MF_01306"/>
    </source>
</evidence>
<evidence type="ECO:0000305" key="2"/>
<sequence>MARYLGPKCRLSRREKTDLQLKSGIRAIDSKCNIERIPGMHWQRRGRTTDYGVQLRMKQMIKRYYDVLEKQFANYYKQADRLKGSTGDNLLKLLESRLDNVVYRMGFAATRAEARQLISHKAILVNGEVVNIPSYQVKPGDIIEVRSRAKGQLRIKGALELAQQRAPISWIEVDTKKMTGTFKEQPDVAELPAEFKVNLVVELYSK</sequence>
<name>RS4_COXB2</name>